<keyword id="KW-0238">DNA-binding</keyword>
<keyword id="KW-1185">Reference proteome</keyword>
<keyword id="KW-0804">Transcription</keyword>
<keyword id="KW-0805">Transcription regulation</keyword>
<feature type="chain" id="PRO_0000176996" description="Transcription elongation factor GreA">
    <location>
        <begin position="1"/>
        <end position="158"/>
    </location>
</feature>
<dbReference type="EMBL" id="BA000021">
    <property type="protein sequence ID" value="BAC24379.1"/>
    <property type="molecule type" value="Genomic_DNA"/>
</dbReference>
<dbReference type="SMR" id="Q8D2W9"/>
<dbReference type="STRING" id="36870.gene:10368723"/>
<dbReference type="KEGG" id="wbr:greA"/>
<dbReference type="eggNOG" id="COG0782">
    <property type="taxonomic scope" value="Bacteria"/>
</dbReference>
<dbReference type="HOGENOM" id="CLU_101379_2_0_6"/>
<dbReference type="OrthoDB" id="9808774at2"/>
<dbReference type="Proteomes" id="UP000000562">
    <property type="component" value="Chromosome"/>
</dbReference>
<dbReference type="GO" id="GO:0003677">
    <property type="term" value="F:DNA binding"/>
    <property type="evidence" value="ECO:0007669"/>
    <property type="project" value="UniProtKB-UniRule"/>
</dbReference>
<dbReference type="GO" id="GO:0070063">
    <property type="term" value="F:RNA polymerase binding"/>
    <property type="evidence" value="ECO:0007669"/>
    <property type="project" value="InterPro"/>
</dbReference>
<dbReference type="GO" id="GO:0006354">
    <property type="term" value="P:DNA-templated transcription elongation"/>
    <property type="evidence" value="ECO:0007669"/>
    <property type="project" value="TreeGrafter"/>
</dbReference>
<dbReference type="GO" id="GO:0032784">
    <property type="term" value="P:regulation of DNA-templated transcription elongation"/>
    <property type="evidence" value="ECO:0007669"/>
    <property type="project" value="UniProtKB-UniRule"/>
</dbReference>
<dbReference type="FunFam" id="1.10.287.180:FF:000001">
    <property type="entry name" value="Transcription elongation factor GreA"/>
    <property type="match status" value="1"/>
</dbReference>
<dbReference type="FunFam" id="3.10.50.30:FF:000001">
    <property type="entry name" value="Transcription elongation factor GreA"/>
    <property type="match status" value="1"/>
</dbReference>
<dbReference type="Gene3D" id="3.10.50.30">
    <property type="entry name" value="Transcription elongation factor, GreA/GreB, C-terminal domain"/>
    <property type="match status" value="1"/>
</dbReference>
<dbReference type="Gene3D" id="1.10.287.180">
    <property type="entry name" value="Transcription elongation factor, GreA/GreB, N-terminal domain"/>
    <property type="match status" value="1"/>
</dbReference>
<dbReference type="HAMAP" id="MF_00105">
    <property type="entry name" value="GreA_GreB"/>
    <property type="match status" value="1"/>
</dbReference>
<dbReference type="InterPro" id="IPR036953">
    <property type="entry name" value="GreA/GreB_C_sf"/>
</dbReference>
<dbReference type="InterPro" id="IPR018151">
    <property type="entry name" value="TF_GreA/GreB_CS"/>
</dbReference>
<dbReference type="InterPro" id="IPR006359">
    <property type="entry name" value="Tscrpt_elong_fac_GreA"/>
</dbReference>
<dbReference type="InterPro" id="IPR028624">
    <property type="entry name" value="Tscrpt_elong_fac_GreA/B"/>
</dbReference>
<dbReference type="InterPro" id="IPR001437">
    <property type="entry name" value="Tscrpt_elong_fac_GreA/B_C"/>
</dbReference>
<dbReference type="InterPro" id="IPR023459">
    <property type="entry name" value="Tscrpt_elong_fac_GreA/B_fam"/>
</dbReference>
<dbReference type="InterPro" id="IPR022691">
    <property type="entry name" value="Tscrpt_elong_fac_GreA/B_N"/>
</dbReference>
<dbReference type="InterPro" id="IPR036805">
    <property type="entry name" value="Tscrpt_elong_fac_GreA/B_N_sf"/>
</dbReference>
<dbReference type="NCBIfam" id="TIGR01462">
    <property type="entry name" value="greA"/>
    <property type="match status" value="1"/>
</dbReference>
<dbReference type="NCBIfam" id="NF001261">
    <property type="entry name" value="PRK00226.1-2"/>
    <property type="match status" value="1"/>
</dbReference>
<dbReference type="NCBIfam" id="NF001263">
    <property type="entry name" value="PRK00226.1-4"/>
    <property type="match status" value="1"/>
</dbReference>
<dbReference type="NCBIfam" id="NF001264">
    <property type="entry name" value="PRK00226.1-5"/>
    <property type="match status" value="1"/>
</dbReference>
<dbReference type="PANTHER" id="PTHR30437">
    <property type="entry name" value="TRANSCRIPTION ELONGATION FACTOR GREA"/>
    <property type="match status" value="1"/>
</dbReference>
<dbReference type="PANTHER" id="PTHR30437:SF4">
    <property type="entry name" value="TRANSCRIPTION ELONGATION FACTOR GREA"/>
    <property type="match status" value="1"/>
</dbReference>
<dbReference type="Pfam" id="PF01272">
    <property type="entry name" value="GreA_GreB"/>
    <property type="match status" value="1"/>
</dbReference>
<dbReference type="Pfam" id="PF03449">
    <property type="entry name" value="GreA_GreB_N"/>
    <property type="match status" value="1"/>
</dbReference>
<dbReference type="PIRSF" id="PIRSF006092">
    <property type="entry name" value="GreA_GreB"/>
    <property type="match status" value="1"/>
</dbReference>
<dbReference type="SUPFAM" id="SSF54534">
    <property type="entry name" value="FKBP-like"/>
    <property type="match status" value="1"/>
</dbReference>
<dbReference type="SUPFAM" id="SSF46557">
    <property type="entry name" value="GreA transcript cleavage protein, N-terminal domain"/>
    <property type="match status" value="1"/>
</dbReference>
<dbReference type="PROSITE" id="PS00829">
    <property type="entry name" value="GREAB_1"/>
    <property type="match status" value="1"/>
</dbReference>
<gene>
    <name evidence="1" type="primary">greA</name>
    <name type="ordered locus">WIGBR2330</name>
</gene>
<proteinExistence type="inferred from homology"/>
<accession>Q8D2W9</accession>
<name>GREA_WIGBR</name>
<comment type="function">
    <text evidence="1">Necessary for efficient RNA polymerase transcription elongation past template-encoded arresting sites. The arresting sites in DNA have the property of trapping a certain fraction of elongating RNA polymerases that pass through, resulting in locked ternary complexes. Cleavage of the nascent transcript by cleavage factors such as GreA or GreB allows the resumption of elongation from the new 3'terminus. GreA releases sequences of 2 to 3 nucleotides.</text>
</comment>
<comment type="similarity">
    <text evidence="1">Belongs to the GreA/GreB family.</text>
</comment>
<organism>
    <name type="scientific">Wigglesworthia glossinidia brevipalpis</name>
    <dbReference type="NCBI Taxonomy" id="36870"/>
    <lineage>
        <taxon>Bacteria</taxon>
        <taxon>Pseudomonadati</taxon>
        <taxon>Pseudomonadota</taxon>
        <taxon>Gammaproteobacteria</taxon>
        <taxon>Enterobacterales</taxon>
        <taxon>Erwiniaceae</taxon>
        <taxon>Wigglesworthia</taxon>
    </lineage>
</organism>
<evidence type="ECO:0000255" key="1">
    <source>
        <dbReference type="HAMAP-Rule" id="MF_00105"/>
    </source>
</evidence>
<protein>
    <recommendedName>
        <fullName evidence="1">Transcription elongation factor GreA</fullName>
    </recommendedName>
    <alternativeName>
        <fullName evidence="1">Transcript cleavage factor GreA</fullName>
    </alternativeName>
</protein>
<reference key="1">
    <citation type="journal article" date="2002" name="Nat. Genet.">
        <title>Genome sequence of the endocellular obligate symbiont of tsetse flies, Wigglesworthia glossinidia.</title>
        <authorList>
            <person name="Akman L."/>
            <person name="Yamashita A."/>
            <person name="Watanabe H."/>
            <person name="Oshima K."/>
            <person name="Shiba T."/>
            <person name="Hattori M."/>
            <person name="Aksoy S."/>
        </authorList>
    </citation>
    <scope>NUCLEOTIDE SEQUENCE [LARGE SCALE GENOMIC DNA]</scope>
</reference>
<sequence>MNYIPMTLKGAEKLREELKYLKQTKRSEIIKSISEARQYGDLKENAEYQAAKEQQYFCESRIKEIESKLMHSKIIDIKKIPFRDRVVFGSTITIKNLKTLEEKTYKIVGDDEANFKNNLISISSPLSRGLIGKKTLEIVNINTPSGIIKYKILKINYL</sequence>